<reference key="1">
    <citation type="submission" date="2007-04" db="EMBL/GenBank/DDBJ databases">
        <title>Complete sequence of chromosome of Rhodobacter sphaeroides ATCC 17025.</title>
        <authorList>
            <consortium name="US DOE Joint Genome Institute"/>
            <person name="Copeland A."/>
            <person name="Lucas S."/>
            <person name="Lapidus A."/>
            <person name="Barry K."/>
            <person name="Detter J.C."/>
            <person name="Glavina del Rio T."/>
            <person name="Hammon N."/>
            <person name="Israni S."/>
            <person name="Dalin E."/>
            <person name="Tice H."/>
            <person name="Pitluck S."/>
            <person name="Chertkov O."/>
            <person name="Brettin T."/>
            <person name="Bruce D."/>
            <person name="Han C."/>
            <person name="Schmutz J."/>
            <person name="Larimer F."/>
            <person name="Land M."/>
            <person name="Hauser L."/>
            <person name="Kyrpides N."/>
            <person name="Kim E."/>
            <person name="Richardson P."/>
            <person name="Mackenzie C."/>
            <person name="Choudhary M."/>
            <person name="Donohue T.J."/>
            <person name="Kaplan S."/>
        </authorList>
    </citation>
    <scope>NUCLEOTIDE SEQUENCE [LARGE SCALE GENOMIC DNA]</scope>
    <source>
        <strain>ATCC 17025 / ATH 2.4.3</strain>
    </source>
</reference>
<dbReference type="EMBL" id="CP000661">
    <property type="protein sequence ID" value="ABP71406.1"/>
    <property type="molecule type" value="Genomic_DNA"/>
</dbReference>
<dbReference type="SMR" id="A4WVJ2"/>
<dbReference type="STRING" id="349102.Rsph17025_2518"/>
<dbReference type="KEGG" id="rsq:Rsph17025_2518"/>
<dbReference type="eggNOG" id="COG0256">
    <property type="taxonomic scope" value="Bacteria"/>
</dbReference>
<dbReference type="HOGENOM" id="CLU_098841_0_1_5"/>
<dbReference type="BioCyc" id="RSPH349102:G1G8M-2596-MONOMER"/>
<dbReference type="GO" id="GO:0022625">
    <property type="term" value="C:cytosolic large ribosomal subunit"/>
    <property type="evidence" value="ECO:0007669"/>
    <property type="project" value="TreeGrafter"/>
</dbReference>
<dbReference type="GO" id="GO:0008097">
    <property type="term" value="F:5S rRNA binding"/>
    <property type="evidence" value="ECO:0007669"/>
    <property type="project" value="TreeGrafter"/>
</dbReference>
<dbReference type="GO" id="GO:0003735">
    <property type="term" value="F:structural constituent of ribosome"/>
    <property type="evidence" value="ECO:0007669"/>
    <property type="project" value="InterPro"/>
</dbReference>
<dbReference type="GO" id="GO:0006412">
    <property type="term" value="P:translation"/>
    <property type="evidence" value="ECO:0007669"/>
    <property type="project" value="UniProtKB-UniRule"/>
</dbReference>
<dbReference type="CDD" id="cd00432">
    <property type="entry name" value="Ribosomal_L18_L5e"/>
    <property type="match status" value="1"/>
</dbReference>
<dbReference type="FunFam" id="3.30.420.100:FF:000001">
    <property type="entry name" value="50S ribosomal protein L18"/>
    <property type="match status" value="1"/>
</dbReference>
<dbReference type="Gene3D" id="3.30.420.100">
    <property type="match status" value="1"/>
</dbReference>
<dbReference type="HAMAP" id="MF_01337_B">
    <property type="entry name" value="Ribosomal_uL18_B"/>
    <property type="match status" value="1"/>
</dbReference>
<dbReference type="InterPro" id="IPR004389">
    <property type="entry name" value="Ribosomal_uL18_bac-type"/>
</dbReference>
<dbReference type="InterPro" id="IPR005484">
    <property type="entry name" value="Ribosomal_uL18_bac/euk"/>
</dbReference>
<dbReference type="NCBIfam" id="TIGR00060">
    <property type="entry name" value="L18_bact"/>
    <property type="match status" value="1"/>
</dbReference>
<dbReference type="PANTHER" id="PTHR12899">
    <property type="entry name" value="39S RIBOSOMAL PROTEIN L18, MITOCHONDRIAL"/>
    <property type="match status" value="1"/>
</dbReference>
<dbReference type="PANTHER" id="PTHR12899:SF3">
    <property type="entry name" value="LARGE RIBOSOMAL SUBUNIT PROTEIN UL18M"/>
    <property type="match status" value="1"/>
</dbReference>
<dbReference type="Pfam" id="PF00861">
    <property type="entry name" value="Ribosomal_L18p"/>
    <property type="match status" value="1"/>
</dbReference>
<dbReference type="SUPFAM" id="SSF53137">
    <property type="entry name" value="Translational machinery components"/>
    <property type="match status" value="1"/>
</dbReference>
<evidence type="ECO:0000255" key="1">
    <source>
        <dbReference type="HAMAP-Rule" id="MF_01337"/>
    </source>
</evidence>
<evidence type="ECO:0000305" key="2"/>
<accession>A4WVJ2</accession>
<proteinExistence type="inferred from homology"/>
<gene>
    <name evidence="1" type="primary">rplR</name>
    <name type="ordered locus">Rsph17025_2518</name>
</gene>
<name>RL18_CERS5</name>
<keyword id="KW-0687">Ribonucleoprotein</keyword>
<keyword id="KW-0689">Ribosomal protein</keyword>
<keyword id="KW-0694">RNA-binding</keyword>
<keyword id="KW-0699">rRNA-binding</keyword>
<protein>
    <recommendedName>
        <fullName evidence="1">Large ribosomal subunit protein uL18</fullName>
    </recommendedName>
    <alternativeName>
        <fullName evidence="2">50S ribosomal protein L18</fullName>
    </alternativeName>
</protein>
<sequence>MANTKRELFLKRRLRVRNKLKASANGRLRLSVHRSSKNISAQLIDDANGVTLAAASTLEKGLGFFGKNNVEASAAVGRTIAERAKAAGIEECYFDRGGFLFHGKIKALADAAREGGLKF</sequence>
<organism>
    <name type="scientific">Cereibacter sphaeroides (strain ATCC 17025 / ATH 2.4.3)</name>
    <name type="common">Rhodobacter sphaeroides</name>
    <dbReference type="NCBI Taxonomy" id="349102"/>
    <lineage>
        <taxon>Bacteria</taxon>
        <taxon>Pseudomonadati</taxon>
        <taxon>Pseudomonadota</taxon>
        <taxon>Alphaproteobacteria</taxon>
        <taxon>Rhodobacterales</taxon>
        <taxon>Paracoccaceae</taxon>
        <taxon>Cereibacter</taxon>
    </lineage>
</organism>
<feature type="chain" id="PRO_1000053097" description="Large ribosomal subunit protein uL18">
    <location>
        <begin position="1"/>
        <end position="119"/>
    </location>
</feature>
<comment type="function">
    <text evidence="1">This is one of the proteins that bind and probably mediate the attachment of the 5S RNA into the large ribosomal subunit, where it forms part of the central protuberance.</text>
</comment>
<comment type="subunit">
    <text evidence="1">Part of the 50S ribosomal subunit; part of the 5S rRNA/L5/L18/L25 subcomplex. Contacts the 5S and 23S rRNAs.</text>
</comment>
<comment type="similarity">
    <text evidence="1">Belongs to the universal ribosomal protein uL18 family.</text>
</comment>